<accession>A6S544</accession>
<accession>A0A384K476</accession>
<name>SEY1_BOTFB</name>
<dbReference type="EC" id="3.6.5.-" evidence="1"/>
<dbReference type="EMBL" id="CP009819">
    <property type="protein sequence ID" value="ATZ57571.1"/>
    <property type="molecule type" value="Genomic_DNA"/>
</dbReference>
<dbReference type="SMR" id="A6S544"/>
<dbReference type="EnsemblFungi" id="Bcin15g01350.1">
    <property type="protein sequence ID" value="Bcin15p01350.1"/>
    <property type="gene ID" value="Bcin15g01350"/>
</dbReference>
<dbReference type="GeneID" id="5434262"/>
<dbReference type="KEGG" id="bfu:BCIN_15g01350"/>
<dbReference type="VEuPathDB" id="FungiDB:Bcin15g01350"/>
<dbReference type="OMA" id="PIIKMTE"/>
<dbReference type="OrthoDB" id="1597724at2759"/>
<dbReference type="Proteomes" id="UP000001798">
    <property type="component" value="Chromosome bcin15"/>
</dbReference>
<dbReference type="GO" id="GO:0005789">
    <property type="term" value="C:endoplasmic reticulum membrane"/>
    <property type="evidence" value="ECO:0007669"/>
    <property type="project" value="UniProtKB-SubCell"/>
</dbReference>
<dbReference type="GO" id="GO:0005525">
    <property type="term" value="F:GTP binding"/>
    <property type="evidence" value="ECO:0007669"/>
    <property type="project" value="UniProtKB-UniRule"/>
</dbReference>
<dbReference type="GO" id="GO:0003924">
    <property type="term" value="F:GTPase activity"/>
    <property type="evidence" value="ECO:0007669"/>
    <property type="project" value="UniProtKB-UniRule"/>
</dbReference>
<dbReference type="GO" id="GO:0016320">
    <property type="term" value="P:endoplasmic reticulum membrane fusion"/>
    <property type="evidence" value="ECO:0007669"/>
    <property type="project" value="TreeGrafter"/>
</dbReference>
<dbReference type="CDD" id="cd01851">
    <property type="entry name" value="GBP"/>
    <property type="match status" value="1"/>
</dbReference>
<dbReference type="FunFam" id="3.40.50.300:FF:000727">
    <property type="entry name" value="Protein SEY1 homolog"/>
    <property type="match status" value="1"/>
</dbReference>
<dbReference type="Gene3D" id="3.40.50.300">
    <property type="entry name" value="P-loop containing nucleotide triphosphate hydrolases"/>
    <property type="match status" value="1"/>
</dbReference>
<dbReference type="HAMAP" id="MF_03109">
    <property type="entry name" value="Sey1"/>
    <property type="match status" value="1"/>
</dbReference>
<dbReference type="InterPro" id="IPR030386">
    <property type="entry name" value="G_GB1_RHD3_dom"/>
</dbReference>
<dbReference type="InterPro" id="IPR027417">
    <property type="entry name" value="P-loop_NTPase"/>
</dbReference>
<dbReference type="InterPro" id="IPR008803">
    <property type="entry name" value="RHD3/Sey1"/>
</dbReference>
<dbReference type="InterPro" id="IPR046758">
    <property type="entry name" value="Sey1/RHD3-like_3HB"/>
</dbReference>
<dbReference type="PANTHER" id="PTHR45923">
    <property type="entry name" value="PROTEIN SEY1"/>
    <property type="match status" value="1"/>
</dbReference>
<dbReference type="PANTHER" id="PTHR45923:SF2">
    <property type="entry name" value="PROTEIN SEY1"/>
    <property type="match status" value="1"/>
</dbReference>
<dbReference type="Pfam" id="PF05879">
    <property type="entry name" value="RHD3_GTPase"/>
    <property type="match status" value="1"/>
</dbReference>
<dbReference type="Pfam" id="PF20428">
    <property type="entry name" value="Sey1_3HB"/>
    <property type="match status" value="1"/>
</dbReference>
<dbReference type="SUPFAM" id="SSF52540">
    <property type="entry name" value="P-loop containing nucleoside triphosphate hydrolases"/>
    <property type="match status" value="1"/>
</dbReference>
<dbReference type="PROSITE" id="PS51715">
    <property type="entry name" value="G_GB1_RHD3"/>
    <property type="match status" value="1"/>
</dbReference>
<proteinExistence type="inferred from homology"/>
<sequence length="886" mass="99373">MATANINGHGERPSAVARFPTAPSVMTMNGNFASVGDAPTKEQYERGIQVIDEQKEFNPNLNTYLQFTDTAHSGFNYHLISVFGSQSTGKSTLLNHLFGTQFGVMSERERRQTTKGIWMSKNKNQSSGASESETMADNILVMDVEGTDGRERGEDQDFERKSALFALATSEVLIVNIWEHQVGLYQGANMGLLKTVFEVNCQLFLKDKQSTPRSLLFFVIRDHLGTTPLANLKDTLIQDLTAIWTSLSKPAGLENSKIEDYFDFAFAALPHKILQPDKFVTEVQKLGTRFRAGHKSTRAEDAGFEGGVFLPEYHRRIPADGFSVYAEGVWDQIVSNKDLDLPTQQELLAQFRCDEISREVLVSFDGKIQPLEEKQAEDTRSGKPTVIADLGSTGKTSRTSTVKNFETQASRYHKGVYALKRTELEGKIDTRLKALYHGQLVAAHKSGVASFSDAVSNAVKLGQKRAASYEFADIVEREKETALKTFETEAKSLYIEGLAWTNFKSQYDLYEKDLNEVSGNLRKEEMRRLATRVERWVRSRLNDSIGVEFNKLGSGRGGSGAPETGEKPASEKDLWDRIWKTFVDTVKEAESKFTDRAKSFDASEDEIEVGLWRLKRKSWGVLRAKIDEEVMEGNILLKLRENFEDKFRYDEAGVPRIWRPSDDIEGIYTKARESTLTLIPLLSKFKLSESSSLPELSEWIGSTPASVDPKDEEDLTPIGGVDEEEGKSLEEEMTVLSEAKRQDLVVRFKKTADGVYVEAKRSAIGGVAQVPLYFYGLLLALGWNEIVAVLRNPIYFIFLILCGIAGYVTYTLNLWGPIIRMMNAASTQGVEIGKEKLREFLKDNEMGRQALGMQGRDHGDSDGISLNTLDSRGKRASREEEEEEEI</sequence>
<reference key="1">
    <citation type="journal article" date="2011" name="PLoS Genet.">
        <title>Genomic analysis of the necrotrophic fungal pathogens Sclerotinia sclerotiorum and Botrytis cinerea.</title>
        <authorList>
            <person name="Amselem J."/>
            <person name="Cuomo C.A."/>
            <person name="van Kan J.A.L."/>
            <person name="Viaud M."/>
            <person name="Benito E.P."/>
            <person name="Couloux A."/>
            <person name="Coutinho P.M."/>
            <person name="de Vries R.P."/>
            <person name="Dyer P.S."/>
            <person name="Fillinger S."/>
            <person name="Fournier E."/>
            <person name="Gout L."/>
            <person name="Hahn M."/>
            <person name="Kohn L."/>
            <person name="Lapalu N."/>
            <person name="Plummer K.M."/>
            <person name="Pradier J.-M."/>
            <person name="Quevillon E."/>
            <person name="Sharon A."/>
            <person name="Simon A."/>
            <person name="ten Have A."/>
            <person name="Tudzynski B."/>
            <person name="Tudzynski P."/>
            <person name="Wincker P."/>
            <person name="Andrew M."/>
            <person name="Anthouard V."/>
            <person name="Beever R.E."/>
            <person name="Beffa R."/>
            <person name="Benoit I."/>
            <person name="Bouzid O."/>
            <person name="Brault B."/>
            <person name="Chen Z."/>
            <person name="Choquer M."/>
            <person name="Collemare J."/>
            <person name="Cotton P."/>
            <person name="Danchin E.G."/>
            <person name="Da Silva C."/>
            <person name="Gautier A."/>
            <person name="Giraud C."/>
            <person name="Giraud T."/>
            <person name="Gonzalez C."/>
            <person name="Grossetete S."/>
            <person name="Gueldener U."/>
            <person name="Henrissat B."/>
            <person name="Howlett B.J."/>
            <person name="Kodira C."/>
            <person name="Kretschmer M."/>
            <person name="Lappartient A."/>
            <person name="Leroch M."/>
            <person name="Levis C."/>
            <person name="Mauceli E."/>
            <person name="Neuveglise C."/>
            <person name="Oeser B."/>
            <person name="Pearson M."/>
            <person name="Poulain J."/>
            <person name="Poussereau N."/>
            <person name="Quesneville H."/>
            <person name="Rascle C."/>
            <person name="Schumacher J."/>
            <person name="Segurens B."/>
            <person name="Sexton A."/>
            <person name="Silva E."/>
            <person name="Sirven C."/>
            <person name="Soanes D.M."/>
            <person name="Talbot N.J."/>
            <person name="Templeton M."/>
            <person name="Yandava C."/>
            <person name="Yarden O."/>
            <person name="Zeng Q."/>
            <person name="Rollins J.A."/>
            <person name="Lebrun M.-H."/>
            <person name="Dickman M."/>
        </authorList>
    </citation>
    <scope>NUCLEOTIDE SEQUENCE [LARGE SCALE GENOMIC DNA]</scope>
    <source>
        <strain>B05.10</strain>
    </source>
</reference>
<reference key="2">
    <citation type="journal article" date="2012" name="Eukaryot. Cell">
        <title>Genome update of Botrytis cinerea strains B05.10 and T4.</title>
        <authorList>
            <person name="Staats M."/>
            <person name="van Kan J.A.L."/>
        </authorList>
    </citation>
    <scope>NUCLEOTIDE SEQUENCE [LARGE SCALE GENOMIC DNA]</scope>
    <scope>GENOME REANNOTATION</scope>
    <source>
        <strain>B05.10</strain>
    </source>
</reference>
<reference key="3">
    <citation type="journal article" date="2017" name="Mol. Plant Pathol.">
        <title>A gapless genome sequence of the fungus Botrytis cinerea.</title>
        <authorList>
            <person name="van Kan J.A.L."/>
            <person name="Stassen J.H.M."/>
            <person name="Mosbach A."/>
            <person name="van der Lee T.A.J."/>
            <person name="Faino L."/>
            <person name="Farmer A.D."/>
            <person name="Papasotiriou D.G."/>
            <person name="Zhou S."/>
            <person name="Seidl M.F."/>
            <person name="Cottam E."/>
            <person name="Edel D."/>
            <person name="Hahn M."/>
            <person name="Schwartz D.C."/>
            <person name="Dietrich R.A."/>
            <person name="Widdison S."/>
            <person name="Scalliet G."/>
        </authorList>
    </citation>
    <scope>NUCLEOTIDE SEQUENCE [LARGE SCALE GENOMIC DNA]</scope>
    <scope>GENOME REANNOTATION</scope>
    <source>
        <strain>B05.10</strain>
    </source>
</reference>
<organism>
    <name type="scientific">Botryotinia fuckeliana (strain B05.10)</name>
    <name type="common">Noble rot fungus</name>
    <name type="synonym">Botrytis cinerea</name>
    <dbReference type="NCBI Taxonomy" id="332648"/>
    <lineage>
        <taxon>Eukaryota</taxon>
        <taxon>Fungi</taxon>
        <taxon>Dikarya</taxon>
        <taxon>Ascomycota</taxon>
        <taxon>Pezizomycotina</taxon>
        <taxon>Leotiomycetes</taxon>
        <taxon>Helotiales</taxon>
        <taxon>Sclerotiniaceae</taxon>
        <taxon>Botrytis</taxon>
    </lineage>
</organism>
<gene>
    <name type="primary">sey1</name>
    <name type="ORF">BC1G_07815</name>
    <name type="ORF">BCIN_15g01350</name>
</gene>
<protein>
    <recommendedName>
        <fullName evidence="1">Protein sey1</fullName>
        <ecNumber evidence="1">3.6.5.-</ecNumber>
    </recommendedName>
</protein>
<keyword id="KW-0175">Coiled coil</keyword>
<keyword id="KW-0256">Endoplasmic reticulum</keyword>
<keyword id="KW-0342">GTP-binding</keyword>
<keyword id="KW-0378">Hydrolase</keyword>
<keyword id="KW-0472">Membrane</keyword>
<keyword id="KW-0547">Nucleotide-binding</keyword>
<keyword id="KW-1185">Reference proteome</keyword>
<keyword id="KW-0812">Transmembrane</keyword>
<keyword id="KW-1133">Transmembrane helix</keyword>
<evidence type="ECO:0000255" key="1">
    <source>
        <dbReference type="HAMAP-Rule" id="MF_03109"/>
    </source>
</evidence>
<evidence type="ECO:0000255" key="2">
    <source>
        <dbReference type="PROSITE-ProRule" id="PRU01052"/>
    </source>
</evidence>
<evidence type="ECO:0000256" key="3">
    <source>
        <dbReference type="SAM" id="MobiDB-lite"/>
    </source>
</evidence>
<comment type="function">
    <text evidence="1">Cooperates with the reticulon proteins and tubule-shaping DP1 family proteins to generate and maintain the structure of the tubular endoplasmic reticulum network. Has GTPase activity, which is required for its function in ER organization.</text>
</comment>
<comment type="subcellular location">
    <subcellularLocation>
        <location evidence="1">Endoplasmic reticulum membrane</location>
        <topology evidence="1">Multi-pass membrane protein</topology>
    </subcellularLocation>
    <text evidence="1">Enriched in the cortical ER. Concentrated in punctae along the ER tubules.</text>
</comment>
<comment type="similarity">
    <text evidence="2">Belongs to the TRAFAC class dynamin-like GTPase superfamily. GB1/RHD3 GTPase family. RHD3 subfamily.</text>
</comment>
<feature type="chain" id="PRO_0000384975" description="Protein sey1">
    <location>
        <begin position="1"/>
        <end position="886"/>
    </location>
</feature>
<feature type="topological domain" description="Cytoplasmic" evidence="1">
    <location>
        <begin position="1"/>
        <end position="769"/>
    </location>
</feature>
<feature type="transmembrane region" description="Helical" evidence="1">
    <location>
        <begin position="770"/>
        <end position="790"/>
    </location>
</feature>
<feature type="topological domain" description="Lumenal" evidence="1">
    <location>
        <begin position="791"/>
        <end position="793"/>
    </location>
</feature>
<feature type="transmembrane region" description="Helical" evidence="1">
    <location>
        <begin position="794"/>
        <end position="814"/>
    </location>
</feature>
<feature type="topological domain" description="Cytoplasmic" evidence="1">
    <location>
        <begin position="815"/>
        <end position="886"/>
    </location>
</feature>
<feature type="domain" description="GB1/RHD3-type G" evidence="2">
    <location>
        <begin position="74"/>
        <end position="313"/>
    </location>
</feature>
<feature type="region of interest" description="Disordered" evidence="3">
    <location>
        <begin position="372"/>
        <end position="399"/>
    </location>
</feature>
<feature type="region of interest" description="Disordered" evidence="3">
    <location>
        <begin position="851"/>
        <end position="886"/>
    </location>
</feature>
<feature type="coiled-coil region" evidence="1">
    <location>
        <begin position="502"/>
        <end position="527"/>
    </location>
</feature>
<feature type="coiled-coil region" evidence="1">
    <location>
        <begin position="722"/>
        <end position="743"/>
    </location>
</feature>
<feature type="compositionally biased region" description="Basic and acidic residues" evidence="3">
    <location>
        <begin position="372"/>
        <end position="381"/>
    </location>
</feature>
<feature type="binding site" evidence="1">
    <location>
        <begin position="84"/>
        <end position="91"/>
    </location>
    <ligand>
        <name>GTP</name>
        <dbReference type="ChEBI" id="CHEBI:37565"/>
    </ligand>
</feature>